<sequence length="1064" mass="117429">MPKRNDIKKIMIIGSGPIIIGQAAEFDYAGTQACLALKEEGYEVVLVNSNPATIMTDREIADTVYIEPITLEFVSKILRKERPDALLPTLGGQTGLNMAMELSKTGILEELNVELLGTKLSAIDQAEDRELFKELCESINEPLCASDIATTVEEAINIADKIGYPIIVRPAFTMGGTGGGICDTEEELREIVANGLKLSPVTQCLIEESIAGYKEIEYEVMRDSADNAIVVCNMENFDPVGVHTGDSIVFAPSQTLSDNEYQMLRDASLNIIRALKIEGGCNVQLALDPNSYEYRVIEVNPRVSRSSALASKATGYPIAKMSAKIAIGMTLDEIINPVTNKTYAMFEPALDYVVAKIARFPFDKFENGDRHLGTQMKATGEVMAIGRNIEESLLKAVRSLEIGVFHNEMTEAIEADDEKLYEKMVKTQDDRLFYVSEAIRRGIPIEEIADLTKIDIFFLDKLLYIVEIENQLKVNIFEPELLKTAKKNGFSDREIAKLWNVTPEEVRRRRQENKIIPVYKMVDTCAAEFESSTPYFYSTYEWENESKRSDKEKIIVLGSGPIRIGQGVEFDYATVHCVKAIQALGKEAIVINSNPETVSTDFSISDKLYFEPLTFEDVMNVIDLEEPLGVIVQFGGQTAINLAEPLSKAGVKILGTQVEDLDRAEDRDLFEKALQDLDIPQPPGATATNEEEAVANANKIGYPVLIRPSFVLGGRAMEIINNEKDLRDYMNRAVKASPEHPVLVDSYLQGQECEVDAICDGKEVLLPGIMEHIERAGVHSGDSMAVYPPQNLSQAIIDTIVDYTKRLAIGLNCIGMMNIQFVIYEEQVYVIEVNPRASRTVPFLSKVTNIPMAQLATQMILGENLKDLGYEAGLAPTPDMVHVKAPVFSFTKLAKVDSLLGPEMKSTGEAMGSDVTLEKALYKSFEAAKLHMADYGSVLFTVADEDKEETLALAKDFAEIGYSLVATAGTAAFLKENGLYVREVEKLAGGEDEEGTLVEDIRQGRVQAVVNTMGNTRASLTTATDGFRIRQEAISRGIPLFTSLDTVAAILKVMQSRSFTTKNI</sequence>
<keyword id="KW-0028">Amino-acid biosynthesis</keyword>
<keyword id="KW-0055">Arginine biosynthesis</keyword>
<keyword id="KW-0067">ATP-binding</keyword>
<keyword id="KW-0436">Ligase</keyword>
<keyword id="KW-0460">Magnesium</keyword>
<keyword id="KW-0464">Manganese</keyword>
<keyword id="KW-0479">Metal-binding</keyword>
<keyword id="KW-0547">Nucleotide-binding</keyword>
<keyword id="KW-0665">Pyrimidine biosynthesis</keyword>
<keyword id="KW-0677">Repeat</keyword>
<evidence type="ECO:0000255" key="1">
    <source>
        <dbReference type="HAMAP-Rule" id="MF_01210"/>
    </source>
</evidence>
<evidence type="ECO:0000305" key="2"/>
<comment type="function">
    <text evidence="1">Large subunit of the glutamine-dependent carbamoyl phosphate synthetase (CPSase). CPSase catalyzes the formation of carbamoyl phosphate from the ammonia moiety of glutamine, carbonate, and phosphate donated by ATP, constituting the first step of 2 biosynthetic pathways, one leading to arginine and/or urea and the other to pyrimidine nucleotides. The large subunit (synthetase) binds the substrates ammonia (free or transferred from glutamine from the small subunit), hydrogencarbonate and ATP and carries out an ATP-coupled ligase reaction, activating hydrogencarbonate by forming carboxy phosphate which reacts with ammonia to form carbamoyl phosphate.</text>
</comment>
<comment type="catalytic activity">
    <reaction evidence="1">
        <text>hydrogencarbonate + L-glutamine + 2 ATP + H2O = carbamoyl phosphate + L-glutamate + 2 ADP + phosphate + 2 H(+)</text>
        <dbReference type="Rhea" id="RHEA:18633"/>
        <dbReference type="ChEBI" id="CHEBI:15377"/>
        <dbReference type="ChEBI" id="CHEBI:15378"/>
        <dbReference type="ChEBI" id="CHEBI:17544"/>
        <dbReference type="ChEBI" id="CHEBI:29985"/>
        <dbReference type="ChEBI" id="CHEBI:30616"/>
        <dbReference type="ChEBI" id="CHEBI:43474"/>
        <dbReference type="ChEBI" id="CHEBI:58228"/>
        <dbReference type="ChEBI" id="CHEBI:58359"/>
        <dbReference type="ChEBI" id="CHEBI:456216"/>
        <dbReference type="EC" id="6.3.5.5"/>
    </reaction>
</comment>
<comment type="catalytic activity">
    <molecule>Carbamoyl phosphate synthase large chain</molecule>
    <reaction evidence="1">
        <text>hydrogencarbonate + NH4(+) + 2 ATP = carbamoyl phosphate + 2 ADP + phosphate + 2 H(+)</text>
        <dbReference type="Rhea" id="RHEA:18029"/>
        <dbReference type="ChEBI" id="CHEBI:15378"/>
        <dbReference type="ChEBI" id="CHEBI:17544"/>
        <dbReference type="ChEBI" id="CHEBI:28938"/>
        <dbReference type="ChEBI" id="CHEBI:30616"/>
        <dbReference type="ChEBI" id="CHEBI:43474"/>
        <dbReference type="ChEBI" id="CHEBI:58228"/>
        <dbReference type="ChEBI" id="CHEBI:456216"/>
        <dbReference type="EC" id="6.3.4.16"/>
    </reaction>
</comment>
<comment type="cofactor">
    <cofactor evidence="1">
        <name>Mg(2+)</name>
        <dbReference type="ChEBI" id="CHEBI:18420"/>
    </cofactor>
    <cofactor evidence="1">
        <name>Mn(2+)</name>
        <dbReference type="ChEBI" id="CHEBI:29035"/>
    </cofactor>
    <text evidence="1">Binds 4 Mg(2+) or Mn(2+) ions per subunit.</text>
</comment>
<comment type="pathway">
    <text evidence="1">Amino-acid biosynthesis; L-arginine biosynthesis; carbamoyl phosphate from bicarbonate: step 1/1.</text>
</comment>
<comment type="pathway">
    <text evidence="1">Pyrimidine metabolism; UMP biosynthesis via de novo pathway; (S)-dihydroorotate from bicarbonate: step 1/3.</text>
</comment>
<comment type="subunit">
    <text evidence="1">Composed of two chains; the small (or glutamine) chain promotes the hydrolysis of glutamine to ammonia, which is used by the large (or ammonia) chain to synthesize carbamoyl phosphate. Tetramer of heterodimers (alpha,beta)4.</text>
</comment>
<comment type="induction">
    <text>Repressed by pyrimidines.</text>
</comment>
<comment type="domain">
    <text evidence="1">The large subunit is composed of 2 ATP-grasp domains that are involved in binding the 2 ATP molecules needed for carbamoyl phosphate synthesis. The N-terminal ATP-grasp domain (referred to as the carboxyphosphate synthetic component) catalyzes the ATP-dependent phosphorylation of hydrogencarbonate to carboxyphosphate and the subsequent nucleophilic attack by ammonia to form a carbamate intermediate. The C-terminal ATP-grasp domain (referred to as the carbamoyl phosphate synthetic component) then catalyzes the phosphorylation of carbamate with the second ATP to form the end product carbamoyl phosphate. The reactive and unstable enzyme intermediates are sequentially channeled from one active site to the next through the interior of the protein over a distance of at least 96 A.</text>
</comment>
<comment type="similarity">
    <text evidence="1">Belongs to the CarB family.</text>
</comment>
<dbReference type="EC" id="6.3.4.16" evidence="1"/>
<dbReference type="EC" id="6.3.5.5" evidence="1"/>
<dbReference type="EMBL" id="AJ000109">
    <property type="protein sequence ID" value="CAA03928.1"/>
    <property type="molecule type" value="Genomic_DNA"/>
</dbReference>
<dbReference type="EMBL" id="AM406671">
    <property type="protein sequence ID" value="CAL97683.1"/>
    <property type="molecule type" value="Genomic_DNA"/>
</dbReference>
<dbReference type="RefSeq" id="WP_011834997.1">
    <property type="nucleotide sequence ID" value="NC_009004.1"/>
</dbReference>
<dbReference type="SMR" id="O32771"/>
<dbReference type="STRING" id="416870.llmg_1089"/>
<dbReference type="KEGG" id="llm:llmg_1089"/>
<dbReference type="eggNOG" id="COG0458">
    <property type="taxonomic scope" value="Bacteria"/>
</dbReference>
<dbReference type="HOGENOM" id="CLU_000513_1_0_9"/>
<dbReference type="OrthoDB" id="9804197at2"/>
<dbReference type="PhylomeDB" id="O32771"/>
<dbReference type="UniPathway" id="UPA00068">
    <property type="reaction ID" value="UER00171"/>
</dbReference>
<dbReference type="UniPathway" id="UPA00070">
    <property type="reaction ID" value="UER00115"/>
</dbReference>
<dbReference type="Proteomes" id="UP000000364">
    <property type="component" value="Chromosome"/>
</dbReference>
<dbReference type="GO" id="GO:0005737">
    <property type="term" value="C:cytoplasm"/>
    <property type="evidence" value="ECO:0007669"/>
    <property type="project" value="TreeGrafter"/>
</dbReference>
<dbReference type="GO" id="GO:0005524">
    <property type="term" value="F:ATP binding"/>
    <property type="evidence" value="ECO:0007669"/>
    <property type="project" value="UniProtKB-UniRule"/>
</dbReference>
<dbReference type="GO" id="GO:0004087">
    <property type="term" value="F:carbamoyl-phosphate synthase (ammonia) activity"/>
    <property type="evidence" value="ECO:0007669"/>
    <property type="project" value="RHEA"/>
</dbReference>
<dbReference type="GO" id="GO:0004088">
    <property type="term" value="F:carbamoyl-phosphate synthase (glutamine-hydrolyzing) activity"/>
    <property type="evidence" value="ECO:0007669"/>
    <property type="project" value="UniProtKB-UniRule"/>
</dbReference>
<dbReference type="GO" id="GO:0046872">
    <property type="term" value="F:metal ion binding"/>
    <property type="evidence" value="ECO:0007669"/>
    <property type="project" value="UniProtKB-KW"/>
</dbReference>
<dbReference type="GO" id="GO:0044205">
    <property type="term" value="P:'de novo' UMP biosynthetic process"/>
    <property type="evidence" value="ECO:0007669"/>
    <property type="project" value="UniProtKB-UniRule"/>
</dbReference>
<dbReference type="GO" id="GO:0006541">
    <property type="term" value="P:glutamine metabolic process"/>
    <property type="evidence" value="ECO:0007669"/>
    <property type="project" value="TreeGrafter"/>
</dbReference>
<dbReference type="GO" id="GO:0006526">
    <property type="term" value="P:L-arginine biosynthetic process"/>
    <property type="evidence" value="ECO:0007669"/>
    <property type="project" value="UniProtKB-UniRule"/>
</dbReference>
<dbReference type="CDD" id="cd01424">
    <property type="entry name" value="MGS_CPS_II"/>
    <property type="match status" value="1"/>
</dbReference>
<dbReference type="FunFam" id="1.10.1030.10:FF:000002">
    <property type="entry name" value="Carbamoyl-phosphate synthase large chain"/>
    <property type="match status" value="1"/>
</dbReference>
<dbReference type="FunFam" id="3.30.1490.20:FF:000001">
    <property type="entry name" value="Carbamoyl-phosphate synthase large chain"/>
    <property type="match status" value="1"/>
</dbReference>
<dbReference type="FunFam" id="3.30.470.20:FF:000001">
    <property type="entry name" value="Carbamoyl-phosphate synthase large chain"/>
    <property type="match status" value="1"/>
</dbReference>
<dbReference type="FunFam" id="3.30.470.20:FF:000026">
    <property type="entry name" value="Carbamoyl-phosphate synthase large chain"/>
    <property type="match status" value="1"/>
</dbReference>
<dbReference type="FunFam" id="3.40.50.20:FF:000001">
    <property type="entry name" value="Carbamoyl-phosphate synthase large chain"/>
    <property type="match status" value="1"/>
</dbReference>
<dbReference type="FunFam" id="3.40.50.20:FF:000002">
    <property type="entry name" value="Carbamoyl-phosphate synthase large chain"/>
    <property type="match status" value="1"/>
</dbReference>
<dbReference type="Gene3D" id="3.40.50.20">
    <property type="match status" value="2"/>
</dbReference>
<dbReference type="Gene3D" id="3.30.1490.20">
    <property type="entry name" value="ATP-grasp fold, A domain"/>
    <property type="match status" value="1"/>
</dbReference>
<dbReference type="Gene3D" id="3.30.470.20">
    <property type="entry name" value="ATP-grasp fold, B domain"/>
    <property type="match status" value="2"/>
</dbReference>
<dbReference type="Gene3D" id="1.10.1030.10">
    <property type="entry name" value="Carbamoyl-phosphate synthetase, large subunit oligomerisation domain"/>
    <property type="match status" value="1"/>
</dbReference>
<dbReference type="Gene3D" id="3.40.50.1380">
    <property type="entry name" value="Methylglyoxal synthase-like domain"/>
    <property type="match status" value="1"/>
</dbReference>
<dbReference type="HAMAP" id="MF_01210_A">
    <property type="entry name" value="CPSase_L_chain_A"/>
    <property type="match status" value="1"/>
</dbReference>
<dbReference type="HAMAP" id="MF_01210_B">
    <property type="entry name" value="CPSase_L_chain_B"/>
    <property type="match status" value="1"/>
</dbReference>
<dbReference type="InterPro" id="IPR011761">
    <property type="entry name" value="ATP-grasp"/>
</dbReference>
<dbReference type="InterPro" id="IPR013815">
    <property type="entry name" value="ATP_grasp_subdomain_1"/>
</dbReference>
<dbReference type="InterPro" id="IPR006275">
    <property type="entry name" value="CarbamoylP_synth_lsu"/>
</dbReference>
<dbReference type="InterPro" id="IPR005480">
    <property type="entry name" value="CarbamoylP_synth_lsu_oligo"/>
</dbReference>
<dbReference type="InterPro" id="IPR036897">
    <property type="entry name" value="CarbamoylP_synth_lsu_oligo_sf"/>
</dbReference>
<dbReference type="InterPro" id="IPR005479">
    <property type="entry name" value="CbamoylP_synth_lsu-like_ATP-bd"/>
</dbReference>
<dbReference type="InterPro" id="IPR005483">
    <property type="entry name" value="CbamoylP_synth_lsu_CPSase_dom"/>
</dbReference>
<dbReference type="InterPro" id="IPR011607">
    <property type="entry name" value="MGS-like_dom"/>
</dbReference>
<dbReference type="InterPro" id="IPR036914">
    <property type="entry name" value="MGS-like_dom_sf"/>
</dbReference>
<dbReference type="InterPro" id="IPR033937">
    <property type="entry name" value="MGS_CPS_CarB"/>
</dbReference>
<dbReference type="InterPro" id="IPR016185">
    <property type="entry name" value="PreATP-grasp_dom_sf"/>
</dbReference>
<dbReference type="NCBIfam" id="TIGR01369">
    <property type="entry name" value="CPSaseII_lrg"/>
    <property type="match status" value="1"/>
</dbReference>
<dbReference type="NCBIfam" id="NF003671">
    <property type="entry name" value="PRK05294.1"/>
    <property type="match status" value="1"/>
</dbReference>
<dbReference type="NCBIfam" id="NF009455">
    <property type="entry name" value="PRK12815.1"/>
    <property type="match status" value="1"/>
</dbReference>
<dbReference type="PANTHER" id="PTHR11405:SF53">
    <property type="entry name" value="CARBAMOYL-PHOSPHATE SYNTHASE [AMMONIA], MITOCHONDRIAL"/>
    <property type="match status" value="1"/>
</dbReference>
<dbReference type="PANTHER" id="PTHR11405">
    <property type="entry name" value="CARBAMOYLTRANSFERASE FAMILY MEMBER"/>
    <property type="match status" value="1"/>
</dbReference>
<dbReference type="Pfam" id="PF02786">
    <property type="entry name" value="CPSase_L_D2"/>
    <property type="match status" value="2"/>
</dbReference>
<dbReference type="Pfam" id="PF02787">
    <property type="entry name" value="CPSase_L_D3"/>
    <property type="match status" value="1"/>
</dbReference>
<dbReference type="Pfam" id="PF02142">
    <property type="entry name" value="MGS"/>
    <property type="match status" value="1"/>
</dbReference>
<dbReference type="PRINTS" id="PR00098">
    <property type="entry name" value="CPSASE"/>
</dbReference>
<dbReference type="SMART" id="SM01096">
    <property type="entry name" value="CPSase_L_D3"/>
    <property type="match status" value="1"/>
</dbReference>
<dbReference type="SMART" id="SM01209">
    <property type="entry name" value="GARS_A"/>
    <property type="match status" value="1"/>
</dbReference>
<dbReference type="SMART" id="SM00851">
    <property type="entry name" value="MGS"/>
    <property type="match status" value="1"/>
</dbReference>
<dbReference type="SUPFAM" id="SSF48108">
    <property type="entry name" value="Carbamoyl phosphate synthetase, large subunit connection domain"/>
    <property type="match status" value="1"/>
</dbReference>
<dbReference type="SUPFAM" id="SSF56059">
    <property type="entry name" value="Glutathione synthetase ATP-binding domain-like"/>
    <property type="match status" value="2"/>
</dbReference>
<dbReference type="SUPFAM" id="SSF52335">
    <property type="entry name" value="Methylglyoxal synthase-like"/>
    <property type="match status" value="1"/>
</dbReference>
<dbReference type="SUPFAM" id="SSF52440">
    <property type="entry name" value="PreATP-grasp domain"/>
    <property type="match status" value="2"/>
</dbReference>
<dbReference type="PROSITE" id="PS50975">
    <property type="entry name" value="ATP_GRASP"/>
    <property type="match status" value="2"/>
</dbReference>
<dbReference type="PROSITE" id="PS00866">
    <property type="entry name" value="CPSASE_1"/>
    <property type="match status" value="2"/>
</dbReference>
<dbReference type="PROSITE" id="PS00867">
    <property type="entry name" value="CPSASE_2"/>
    <property type="match status" value="2"/>
</dbReference>
<dbReference type="PROSITE" id="PS51855">
    <property type="entry name" value="MGS"/>
    <property type="match status" value="1"/>
</dbReference>
<gene>
    <name evidence="1" type="primary">carB</name>
    <name type="ordered locus">llmg_1089</name>
</gene>
<reference key="1">
    <citation type="journal article" date="1998" name="J. Bacteriol.">
        <title>The carB gene encoding the large subunit of carbamoylphosphate synthetase from Lactococcus lactis is transcribed monocistronically.</title>
        <authorList>
            <person name="Martinussen J."/>
            <person name="Hammer K."/>
        </authorList>
    </citation>
    <scope>NUCLEOTIDE SEQUENCE [GENOMIC DNA]</scope>
</reference>
<reference key="2">
    <citation type="journal article" date="2007" name="J. Bacteriol.">
        <title>The complete genome sequence of the lactic acid bacterial paradigm Lactococcus lactis subsp. cremoris MG1363.</title>
        <authorList>
            <person name="Wegmann U."/>
            <person name="O'Connell-Motherway M."/>
            <person name="Zomer A."/>
            <person name="Buist G."/>
            <person name="Shearman C."/>
            <person name="Canchaya C."/>
            <person name="Ventura M."/>
            <person name="Goesmann A."/>
            <person name="Gasson M.J."/>
            <person name="Kuipers O.P."/>
            <person name="van Sinderen D."/>
            <person name="Kok J."/>
        </authorList>
    </citation>
    <scope>NUCLEOTIDE SEQUENCE [LARGE SCALE GENOMIC DNA]</scope>
    <source>
        <strain>MG1363</strain>
    </source>
</reference>
<proteinExistence type="evidence at transcript level"/>
<protein>
    <recommendedName>
        <fullName evidence="1">Carbamoyl phosphate synthase large chain</fullName>
        <ecNumber evidence="1">6.3.4.16</ecNumber>
        <ecNumber evidence="1">6.3.5.5</ecNumber>
    </recommendedName>
    <alternativeName>
        <fullName evidence="1">Carbamoyl phosphate synthetase ammonia chain</fullName>
    </alternativeName>
</protein>
<organism>
    <name type="scientific">Lactococcus lactis subsp. cremoris (strain MG1363)</name>
    <dbReference type="NCBI Taxonomy" id="416870"/>
    <lineage>
        <taxon>Bacteria</taxon>
        <taxon>Bacillati</taxon>
        <taxon>Bacillota</taxon>
        <taxon>Bacilli</taxon>
        <taxon>Lactobacillales</taxon>
        <taxon>Streptococcaceae</taxon>
        <taxon>Lactococcus</taxon>
        <taxon>Lactococcus cremoris subsp. cremoris</taxon>
    </lineage>
</organism>
<accession>O32771</accession>
<accession>A2RK73</accession>
<feature type="chain" id="PRO_0000145013" description="Carbamoyl phosphate synthase large chain">
    <location>
        <begin position="1"/>
        <end position="1064"/>
    </location>
</feature>
<feature type="domain" description="ATP-grasp 1" evidence="1">
    <location>
        <begin position="133"/>
        <end position="327"/>
    </location>
</feature>
<feature type="domain" description="ATP-grasp 2" evidence="1">
    <location>
        <begin position="671"/>
        <end position="861"/>
    </location>
</feature>
<feature type="domain" description="MGS-like" evidence="1">
    <location>
        <begin position="930"/>
        <end position="1064"/>
    </location>
</feature>
<feature type="region of interest" description="Carboxyphosphate synthetic domain" evidence="1">
    <location>
        <begin position="1"/>
        <end position="401"/>
    </location>
</feature>
<feature type="region of interest" description="Oligomerization domain" evidence="1">
    <location>
        <begin position="402"/>
        <end position="546"/>
    </location>
</feature>
<feature type="region of interest" description="Carbamoyl phosphate synthetic domain" evidence="1">
    <location>
        <begin position="547"/>
        <end position="929"/>
    </location>
</feature>
<feature type="region of interest" description="Allosteric domain" evidence="1">
    <location>
        <begin position="930"/>
        <end position="1064"/>
    </location>
</feature>
<feature type="binding site" evidence="1">
    <location>
        <position position="129"/>
    </location>
    <ligand>
        <name>ATP</name>
        <dbReference type="ChEBI" id="CHEBI:30616"/>
        <label>1</label>
    </ligand>
</feature>
<feature type="binding site" evidence="1">
    <location>
        <position position="169"/>
    </location>
    <ligand>
        <name>ATP</name>
        <dbReference type="ChEBI" id="CHEBI:30616"/>
        <label>1</label>
    </ligand>
</feature>
<feature type="binding site" evidence="1">
    <location>
        <position position="175"/>
    </location>
    <ligand>
        <name>ATP</name>
        <dbReference type="ChEBI" id="CHEBI:30616"/>
        <label>1</label>
    </ligand>
</feature>
<feature type="binding site" evidence="1">
    <location>
        <position position="176"/>
    </location>
    <ligand>
        <name>ATP</name>
        <dbReference type="ChEBI" id="CHEBI:30616"/>
        <label>1</label>
    </ligand>
</feature>
<feature type="binding site" evidence="1">
    <location>
        <position position="208"/>
    </location>
    <ligand>
        <name>ATP</name>
        <dbReference type="ChEBI" id="CHEBI:30616"/>
        <label>1</label>
    </ligand>
</feature>
<feature type="binding site" evidence="1">
    <location>
        <position position="210"/>
    </location>
    <ligand>
        <name>ATP</name>
        <dbReference type="ChEBI" id="CHEBI:30616"/>
        <label>1</label>
    </ligand>
</feature>
<feature type="binding site" evidence="1">
    <location>
        <position position="215"/>
    </location>
    <ligand>
        <name>ATP</name>
        <dbReference type="ChEBI" id="CHEBI:30616"/>
        <label>1</label>
    </ligand>
</feature>
<feature type="binding site" evidence="1">
    <location>
        <position position="241"/>
    </location>
    <ligand>
        <name>ATP</name>
        <dbReference type="ChEBI" id="CHEBI:30616"/>
        <label>1</label>
    </ligand>
</feature>
<feature type="binding site" evidence="1">
    <location>
        <position position="242"/>
    </location>
    <ligand>
        <name>ATP</name>
        <dbReference type="ChEBI" id="CHEBI:30616"/>
        <label>1</label>
    </ligand>
</feature>
<feature type="binding site" evidence="1">
    <location>
        <position position="243"/>
    </location>
    <ligand>
        <name>ATP</name>
        <dbReference type="ChEBI" id="CHEBI:30616"/>
        <label>1</label>
    </ligand>
</feature>
<feature type="binding site" evidence="1">
    <location>
        <position position="284"/>
    </location>
    <ligand>
        <name>ATP</name>
        <dbReference type="ChEBI" id="CHEBI:30616"/>
        <label>1</label>
    </ligand>
</feature>
<feature type="binding site" evidence="1">
    <location>
        <position position="284"/>
    </location>
    <ligand>
        <name>Mg(2+)</name>
        <dbReference type="ChEBI" id="CHEBI:18420"/>
        <label>1</label>
    </ligand>
</feature>
<feature type="binding site" evidence="1">
    <location>
        <position position="284"/>
    </location>
    <ligand>
        <name>Mn(2+)</name>
        <dbReference type="ChEBI" id="CHEBI:29035"/>
        <label>1</label>
    </ligand>
</feature>
<feature type="binding site" evidence="1">
    <location>
        <position position="298"/>
    </location>
    <ligand>
        <name>ATP</name>
        <dbReference type="ChEBI" id="CHEBI:30616"/>
        <label>1</label>
    </ligand>
</feature>
<feature type="binding site" evidence="1">
    <location>
        <position position="298"/>
    </location>
    <ligand>
        <name>Mg(2+)</name>
        <dbReference type="ChEBI" id="CHEBI:18420"/>
        <label>1</label>
    </ligand>
</feature>
<feature type="binding site" evidence="1">
    <location>
        <position position="298"/>
    </location>
    <ligand>
        <name>Mg(2+)</name>
        <dbReference type="ChEBI" id="CHEBI:18420"/>
        <label>2</label>
    </ligand>
</feature>
<feature type="binding site" evidence="1">
    <location>
        <position position="298"/>
    </location>
    <ligand>
        <name>Mn(2+)</name>
        <dbReference type="ChEBI" id="CHEBI:29035"/>
        <label>1</label>
    </ligand>
</feature>
<feature type="binding site" evidence="1">
    <location>
        <position position="298"/>
    </location>
    <ligand>
        <name>Mn(2+)</name>
        <dbReference type="ChEBI" id="CHEBI:29035"/>
        <label>2</label>
    </ligand>
</feature>
<feature type="binding site" evidence="1">
    <location>
        <position position="300"/>
    </location>
    <ligand>
        <name>Mg(2+)</name>
        <dbReference type="ChEBI" id="CHEBI:18420"/>
        <label>2</label>
    </ligand>
</feature>
<feature type="binding site" evidence="1">
    <location>
        <position position="300"/>
    </location>
    <ligand>
        <name>Mn(2+)</name>
        <dbReference type="ChEBI" id="CHEBI:29035"/>
        <label>2</label>
    </ligand>
</feature>
<feature type="binding site" evidence="1">
    <location>
        <position position="707"/>
    </location>
    <ligand>
        <name>ATP</name>
        <dbReference type="ChEBI" id="CHEBI:30616"/>
        <label>2</label>
    </ligand>
</feature>
<feature type="binding site" evidence="1">
    <location>
        <position position="746"/>
    </location>
    <ligand>
        <name>ATP</name>
        <dbReference type="ChEBI" id="CHEBI:30616"/>
        <label>2</label>
    </ligand>
</feature>
<feature type="binding site" evidence="1">
    <location>
        <position position="748"/>
    </location>
    <ligand>
        <name>ATP</name>
        <dbReference type="ChEBI" id="CHEBI:30616"/>
        <label>2</label>
    </ligand>
</feature>
<feature type="binding site" evidence="1">
    <location>
        <position position="752"/>
    </location>
    <ligand>
        <name>ATP</name>
        <dbReference type="ChEBI" id="CHEBI:30616"/>
        <label>2</label>
    </ligand>
</feature>
<feature type="binding site" evidence="1">
    <location>
        <position position="777"/>
    </location>
    <ligand>
        <name>ATP</name>
        <dbReference type="ChEBI" id="CHEBI:30616"/>
        <label>2</label>
    </ligand>
</feature>
<feature type="binding site" evidence="1">
    <location>
        <position position="778"/>
    </location>
    <ligand>
        <name>ATP</name>
        <dbReference type="ChEBI" id="CHEBI:30616"/>
        <label>2</label>
    </ligand>
</feature>
<feature type="binding site" evidence="1">
    <location>
        <position position="779"/>
    </location>
    <ligand>
        <name>ATP</name>
        <dbReference type="ChEBI" id="CHEBI:30616"/>
        <label>2</label>
    </ligand>
</feature>
<feature type="binding site" evidence="1">
    <location>
        <position position="780"/>
    </location>
    <ligand>
        <name>ATP</name>
        <dbReference type="ChEBI" id="CHEBI:30616"/>
        <label>2</label>
    </ligand>
</feature>
<feature type="binding site" evidence="1">
    <location>
        <position position="820"/>
    </location>
    <ligand>
        <name>ATP</name>
        <dbReference type="ChEBI" id="CHEBI:30616"/>
        <label>2</label>
    </ligand>
</feature>
<feature type="binding site" evidence="1">
    <location>
        <position position="820"/>
    </location>
    <ligand>
        <name>Mg(2+)</name>
        <dbReference type="ChEBI" id="CHEBI:18420"/>
        <label>3</label>
    </ligand>
</feature>
<feature type="binding site" evidence="1">
    <location>
        <position position="820"/>
    </location>
    <ligand>
        <name>Mn(2+)</name>
        <dbReference type="ChEBI" id="CHEBI:29035"/>
        <label>3</label>
    </ligand>
</feature>
<feature type="binding site" evidence="1">
    <location>
        <position position="832"/>
    </location>
    <ligand>
        <name>ATP</name>
        <dbReference type="ChEBI" id="CHEBI:30616"/>
        <label>2</label>
    </ligand>
</feature>
<feature type="binding site" evidence="1">
    <location>
        <position position="832"/>
    </location>
    <ligand>
        <name>Mg(2+)</name>
        <dbReference type="ChEBI" id="CHEBI:18420"/>
        <label>3</label>
    </ligand>
</feature>
<feature type="binding site" evidence="1">
    <location>
        <position position="832"/>
    </location>
    <ligand>
        <name>Mg(2+)</name>
        <dbReference type="ChEBI" id="CHEBI:18420"/>
        <label>4</label>
    </ligand>
</feature>
<feature type="binding site" evidence="1">
    <location>
        <position position="832"/>
    </location>
    <ligand>
        <name>Mn(2+)</name>
        <dbReference type="ChEBI" id="CHEBI:29035"/>
        <label>3</label>
    </ligand>
</feature>
<feature type="binding site" evidence="1">
    <location>
        <position position="832"/>
    </location>
    <ligand>
        <name>Mn(2+)</name>
        <dbReference type="ChEBI" id="CHEBI:29035"/>
        <label>4</label>
    </ligand>
</feature>
<feature type="binding site" evidence="1">
    <location>
        <position position="834"/>
    </location>
    <ligand>
        <name>Mg(2+)</name>
        <dbReference type="ChEBI" id="CHEBI:18420"/>
        <label>4</label>
    </ligand>
</feature>
<feature type="binding site" evidence="1">
    <location>
        <position position="834"/>
    </location>
    <ligand>
        <name>Mn(2+)</name>
        <dbReference type="ChEBI" id="CHEBI:29035"/>
        <label>4</label>
    </ligand>
</feature>
<feature type="sequence conflict" description="In Ref. 1; CAA03928." evidence="2" ref="1">
    <original>Q</original>
    <variation>E</variation>
    <location>
        <position position="32"/>
    </location>
</feature>
<feature type="sequence conflict" description="In Ref. 1; CAA03928." evidence="2" ref="1">
    <original>R</original>
    <variation>G</variation>
    <location>
        <position position="169"/>
    </location>
</feature>
<feature type="sequence conflict" description="In Ref. 1; CAA03928." evidence="2" ref="1">
    <original>G</original>
    <variation>V</variation>
    <location>
        <position position="629"/>
    </location>
</feature>
<feature type="sequence conflict" description="In Ref. 1; CAA03928." evidence="2" ref="1">
    <original>P</original>
    <variation>H</variation>
    <location>
        <position position="645"/>
    </location>
</feature>
<feature type="sequence conflict" description="In Ref. 1; CAA03928." evidence="2" ref="1">
    <original>E</original>
    <variation>L</variation>
    <location>
        <position position="909"/>
    </location>
</feature>
<name>CARB_LACLM</name>